<protein>
    <recommendedName>
        <fullName evidence="1">Fumarate reductase subunit D</fullName>
    </recommendedName>
    <alternativeName>
        <fullName evidence="1">Quinol-fumarate reductase subunit D</fullName>
        <shortName evidence="1">QFR subunit D</shortName>
    </alternativeName>
</protein>
<organism>
    <name type="scientific">Vibrio cholerae serotype O1 (strain M66-2)</name>
    <dbReference type="NCBI Taxonomy" id="579112"/>
    <lineage>
        <taxon>Bacteria</taxon>
        <taxon>Pseudomonadati</taxon>
        <taxon>Pseudomonadota</taxon>
        <taxon>Gammaproteobacteria</taxon>
        <taxon>Vibrionales</taxon>
        <taxon>Vibrionaceae</taxon>
        <taxon>Vibrio</taxon>
    </lineage>
</organism>
<proteinExistence type="inferred from homology"/>
<accession>C3LS88</accession>
<dbReference type="EMBL" id="CP001233">
    <property type="protein sequence ID" value="ACP06875.1"/>
    <property type="molecule type" value="Genomic_DNA"/>
</dbReference>
<dbReference type="SMR" id="C3LS88"/>
<dbReference type="KEGG" id="vcm:VCM66_2579"/>
<dbReference type="HOGENOM" id="CLU_168367_0_0_6"/>
<dbReference type="Proteomes" id="UP000001217">
    <property type="component" value="Chromosome I"/>
</dbReference>
<dbReference type="GO" id="GO:0045283">
    <property type="term" value="C:fumarate reductase complex"/>
    <property type="evidence" value="ECO:0007669"/>
    <property type="project" value="UniProtKB-UniRule"/>
</dbReference>
<dbReference type="GO" id="GO:0005886">
    <property type="term" value="C:plasma membrane"/>
    <property type="evidence" value="ECO:0007669"/>
    <property type="project" value="UniProtKB-SubCell"/>
</dbReference>
<dbReference type="GO" id="GO:0000104">
    <property type="term" value="F:succinate dehydrogenase activity"/>
    <property type="evidence" value="ECO:0007669"/>
    <property type="project" value="UniProtKB-UniRule"/>
</dbReference>
<dbReference type="GO" id="GO:0006106">
    <property type="term" value="P:fumarate metabolic process"/>
    <property type="evidence" value="ECO:0007669"/>
    <property type="project" value="InterPro"/>
</dbReference>
<dbReference type="CDD" id="cd00547">
    <property type="entry name" value="QFR_TypeD_subunitD"/>
    <property type="match status" value="1"/>
</dbReference>
<dbReference type="Gene3D" id="1.20.1300.10">
    <property type="entry name" value="Fumarate reductase/succinate dehydrogenase, transmembrane subunit"/>
    <property type="match status" value="1"/>
</dbReference>
<dbReference type="HAMAP" id="MF_00709">
    <property type="entry name" value="Fumarate_red_D"/>
    <property type="match status" value="1"/>
</dbReference>
<dbReference type="InterPro" id="IPR003418">
    <property type="entry name" value="Fumarate_red_D"/>
</dbReference>
<dbReference type="InterPro" id="IPR034804">
    <property type="entry name" value="SQR/QFR_C/D"/>
</dbReference>
<dbReference type="NCBIfam" id="NF003977">
    <property type="entry name" value="PRK05470.1-1"/>
    <property type="match status" value="1"/>
</dbReference>
<dbReference type="Pfam" id="PF02313">
    <property type="entry name" value="Fumarate_red_D"/>
    <property type="match status" value="1"/>
</dbReference>
<dbReference type="PIRSF" id="PIRSF000179">
    <property type="entry name" value="FrdD"/>
    <property type="match status" value="1"/>
</dbReference>
<dbReference type="SUPFAM" id="SSF81343">
    <property type="entry name" value="Fumarate reductase respiratory complex transmembrane subunits"/>
    <property type="match status" value="1"/>
</dbReference>
<comment type="function">
    <text evidence="1">Anchors the catalytic components of the fumarate reductase complex to the cell membrane, binds quinones.</text>
</comment>
<comment type="subunit">
    <text evidence="1">Part of an enzyme complex containing four subunits: a flavoprotein (FrdA), an iron-sulfur protein (FrdB), and two hydrophobic anchor proteins (FrdC and FrdD).</text>
</comment>
<comment type="subcellular location">
    <subcellularLocation>
        <location evidence="1">Cell inner membrane</location>
        <topology evidence="1">Multi-pass membrane protein</topology>
    </subcellularLocation>
</comment>
<comment type="similarity">
    <text evidence="1">Belongs to the FrdD family.</text>
</comment>
<gene>
    <name evidence="1" type="primary">frdD</name>
    <name type="ordered locus">VCM66_2579</name>
</gene>
<reference key="1">
    <citation type="journal article" date="2008" name="PLoS ONE">
        <title>A recalibrated molecular clock and independent origins for the cholera pandemic clones.</title>
        <authorList>
            <person name="Feng L."/>
            <person name="Reeves P.R."/>
            <person name="Lan R."/>
            <person name="Ren Y."/>
            <person name="Gao C."/>
            <person name="Zhou Z."/>
            <person name="Ren Y."/>
            <person name="Cheng J."/>
            <person name="Wang W."/>
            <person name="Wang J."/>
            <person name="Qian W."/>
            <person name="Li D."/>
            <person name="Wang L."/>
        </authorList>
    </citation>
    <scope>NUCLEOTIDE SEQUENCE [LARGE SCALE GENOMIC DNA]</scope>
    <source>
        <strain>M66-2</strain>
    </source>
</reference>
<keyword id="KW-0997">Cell inner membrane</keyword>
<keyword id="KW-1003">Cell membrane</keyword>
<keyword id="KW-0472">Membrane</keyword>
<keyword id="KW-0812">Transmembrane</keyword>
<keyword id="KW-1133">Transmembrane helix</keyword>
<evidence type="ECO:0000255" key="1">
    <source>
        <dbReference type="HAMAP-Rule" id="MF_00709"/>
    </source>
</evidence>
<name>FRDD_VIBCM</name>
<feature type="chain" id="PRO_1000147959" description="Fumarate reductase subunit D">
    <location>
        <begin position="1"/>
        <end position="130"/>
    </location>
</feature>
<feature type="transmembrane region" description="Helical" evidence="1">
    <location>
        <begin position="35"/>
        <end position="55"/>
    </location>
</feature>
<feature type="transmembrane region" description="Helical" evidence="1">
    <location>
        <begin position="67"/>
        <end position="87"/>
    </location>
</feature>
<feature type="transmembrane region" description="Helical" evidence="1">
    <location>
        <begin position="110"/>
        <end position="130"/>
    </location>
</feature>
<sequence length="130" mass="14287">MFLLWCKELIVINTNPKRSDEPVWWSLFGAGGTWFAMITPITVLVLGILAPLGVIDAEALSYERVSSFATSIIGALFIIGTLALPMWHAMHRVHHGMHDLKFHTGVAGKIACYGFATIISALAVVFIFMI</sequence>